<evidence type="ECO:0000255" key="1">
    <source>
        <dbReference type="PROSITE-ProRule" id="PRU00176"/>
    </source>
</evidence>
<evidence type="ECO:0000256" key="2">
    <source>
        <dbReference type="SAM" id="MobiDB-lite"/>
    </source>
</evidence>
<evidence type="ECO:0000269" key="3">
    <source>
    </source>
</evidence>
<evidence type="ECO:0000269" key="4">
    <source>
    </source>
</evidence>
<evidence type="ECO:0000269" key="5">
    <source>
    </source>
</evidence>
<gene>
    <name type="primary">dazap1</name>
    <name type="synonym">prrp</name>
</gene>
<name>DAZP1_XENLA</name>
<reference key="1">
    <citation type="journal article" date="2001" name="EMBO J.">
        <title>A proline-rich protein binds to the localization element of Xenopus Vg1 mRNA and to ligands involved in actin polymerization.</title>
        <authorList>
            <person name="Zhao W.-M."/>
            <person name="Jiang C."/>
            <person name="Kroll T.T."/>
            <person name="Huber P.W."/>
        </authorList>
    </citation>
    <scope>NUCLEOTIDE SEQUENCE [MRNA]</scope>
    <scope>FUNCTION</scope>
    <scope>RNA-BINDING</scope>
    <scope>SUBCELLULAR LOCATION</scope>
    <scope>TISSUE SPECIFICITY</scope>
    <scope>DEVELOPMENTAL STAGE</scope>
    <scope>INTERACTION WITH PROFILIN</scope>
    <source>
        <tissue>Ovary</tissue>
    </source>
</reference>
<reference key="2">
    <citation type="journal article" date="2002" name="Development">
        <title>A homolog of FBP2/KSRP binds to localized mRNAs in Xenopus oocytes.</title>
        <authorList>
            <person name="Kroll T.T."/>
            <person name="Zhao W.-M."/>
            <person name="Jiang C."/>
            <person name="Huber P.W."/>
        </authorList>
    </citation>
    <scope>INTERACTION WITH VGRBP71</scope>
</reference>
<reference key="3">
    <citation type="journal article" date="2004" name="J. Cell Biol.">
        <title>Nuclear RNP complex assembly initiates cytoplasmic RNA localization.</title>
        <authorList>
            <person name="Kress T.L."/>
            <person name="Yoon Y.J."/>
            <person name="Mowry K.L."/>
        </authorList>
    </citation>
    <scope>IDENTIFICATION IN A MRNP COMPLEX WITH IGF2BP3-A; STAU AND VGRBP60</scope>
</reference>
<organism>
    <name type="scientific">Xenopus laevis</name>
    <name type="common">African clawed frog</name>
    <dbReference type="NCBI Taxonomy" id="8355"/>
    <lineage>
        <taxon>Eukaryota</taxon>
        <taxon>Metazoa</taxon>
        <taxon>Chordata</taxon>
        <taxon>Craniata</taxon>
        <taxon>Vertebrata</taxon>
        <taxon>Euteleostomi</taxon>
        <taxon>Amphibia</taxon>
        <taxon>Batrachia</taxon>
        <taxon>Anura</taxon>
        <taxon>Pipoidea</taxon>
        <taxon>Pipidae</taxon>
        <taxon>Xenopodinae</taxon>
        <taxon>Xenopus</taxon>
        <taxon>Xenopus</taxon>
    </lineage>
</organism>
<sequence>MNNQGGDEIGKLFVGGLDWSTTQETLRSYFSQYGEVVDCVIMKDKTTNQSRGFGFVKFKDPNCVGTVLASRPHTLDGRNIDPKPCTPRGMQPERSRPREGWQQKEPRTENSRSNKIFVGGIPHNCGETELKEYFNRFGVVTEVVMIYDAEKQRPRGFGFITFEDEQSVDQAVNMHFHDIMGKKVEVKRAEPRDSKSQTPGPPGSNQWGSRAMQSTANGWTGQPPQTWQGYSPQGMWMPTGQTIGGYGQPAGRGGPPPPPSFAPFLVSTTPGPFPPPQGFPPGYATPPPFGYGYGPPPPPPDQFVSSGVPPPPGTPGAAPLAFPPPPGQSAQDLSKPPSGQQDFPFSQFGNACFVKLSEWI</sequence>
<keyword id="KW-0963">Cytoplasm</keyword>
<keyword id="KW-0217">Developmental protein</keyword>
<keyword id="KW-0221">Differentiation</keyword>
<keyword id="KW-0896">Oogenesis</keyword>
<keyword id="KW-1185">Reference proteome</keyword>
<keyword id="KW-0677">Repeat</keyword>
<keyword id="KW-0694">RNA-binding</keyword>
<feature type="chain" id="PRO_0000081567" description="DAZ-associated protein 1">
    <location>
        <begin position="1"/>
        <end position="360"/>
    </location>
</feature>
<feature type="domain" description="RRM 1" evidence="1">
    <location>
        <begin position="10"/>
        <end position="97"/>
    </location>
</feature>
<feature type="domain" description="RRM 2" evidence="1">
    <location>
        <begin position="114"/>
        <end position="191"/>
    </location>
</feature>
<feature type="region of interest" description="Disordered" evidence="2">
    <location>
        <begin position="73"/>
        <end position="116"/>
    </location>
</feature>
<feature type="region of interest" description="Disordered" evidence="2">
    <location>
        <begin position="184"/>
        <end position="345"/>
    </location>
</feature>
<feature type="compositionally biased region" description="Basic and acidic residues" evidence="2">
    <location>
        <begin position="91"/>
        <end position="112"/>
    </location>
</feature>
<feature type="compositionally biased region" description="Basic and acidic residues" evidence="2">
    <location>
        <begin position="184"/>
        <end position="195"/>
    </location>
</feature>
<feature type="compositionally biased region" description="Polar residues" evidence="2">
    <location>
        <begin position="203"/>
        <end position="231"/>
    </location>
</feature>
<feature type="compositionally biased region" description="Gly residues" evidence="2">
    <location>
        <begin position="242"/>
        <end position="253"/>
    </location>
</feature>
<feature type="compositionally biased region" description="Pro residues" evidence="2">
    <location>
        <begin position="271"/>
        <end position="301"/>
    </location>
</feature>
<feature type="compositionally biased region" description="Polar residues" evidence="2">
    <location>
        <begin position="328"/>
        <end position="345"/>
    </location>
</feature>
<accession>Q98SJ2</accession>
<dbReference type="EMBL" id="AY028920">
    <property type="protein sequence ID" value="AAK26172.1"/>
    <property type="molecule type" value="mRNA"/>
</dbReference>
<dbReference type="RefSeq" id="NP_001082088.1">
    <property type="nucleotide sequence ID" value="NM_001088619.1"/>
</dbReference>
<dbReference type="SMR" id="Q98SJ2"/>
<dbReference type="DNASU" id="398218"/>
<dbReference type="GeneID" id="398218"/>
<dbReference type="KEGG" id="xla:398218"/>
<dbReference type="AGR" id="Xenbase:XB-GENE-864805"/>
<dbReference type="CTD" id="398218"/>
<dbReference type="Xenbase" id="XB-GENE-864805">
    <property type="gene designation" value="dazap1.S"/>
</dbReference>
<dbReference type="OrthoDB" id="1875751at2759"/>
<dbReference type="Proteomes" id="UP000186698">
    <property type="component" value="Chromosome 1S"/>
</dbReference>
<dbReference type="Bgee" id="398218">
    <property type="expression patterns" value="Expressed in neurula embryo and 19 other cell types or tissues"/>
</dbReference>
<dbReference type="GO" id="GO:0005737">
    <property type="term" value="C:cytoplasm"/>
    <property type="evidence" value="ECO:0000318"/>
    <property type="project" value="GO_Central"/>
</dbReference>
<dbReference type="GO" id="GO:0003729">
    <property type="term" value="F:mRNA binding"/>
    <property type="evidence" value="ECO:0000318"/>
    <property type="project" value="GO_Central"/>
</dbReference>
<dbReference type="GO" id="GO:0003723">
    <property type="term" value="F:RNA binding"/>
    <property type="evidence" value="ECO:0000314"/>
    <property type="project" value="MGI"/>
</dbReference>
<dbReference type="GO" id="GO:0048477">
    <property type="term" value="P:oogenesis"/>
    <property type="evidence" value="ECO:0007669"/>
    <property type="project" value="UniProtKB-KW"/>
</dbReference>
<dbReference type="GO" id="GO:0006417">
    <property type="term" value="P:regulation of translation"/>
    <property type="evidence" value="ECO:0000318"/>
    <property type="project" value="GO_Central"/>
</dbReference>
<dbReference type="CDD" id="cd12574">
    <property type="entry name" value="RRM1_DAZAP1"/>
    <property type="match status" value="1"/>
</dbReference>
<dbReference type="CDD" id="cd12327">
    <property type="entry name" value="RRM2_DAZAP1"/>
    <property type="match status" value="1"/>
</dbReference>
<dbReference type="FunFam" id="3.30.70.330:FF:000129">
    <property type="entry name" value="DAZ-associated protein 1 isoform X1"/>
    <property type="match status" value="1"/>
</dbReference>
<dbReference type="FunFam" id="3.30.70.330:FF:000093">
    <property type="entry name" value="Putative DAZ-associated protein 1"/>
    <property type="match status" value="1"/>
</dbReference>
<dbReference type="Gene3D" id="3.30.70.330">
    <property type="match status" value="2"/>
</dbReference>
<dbReference type="InterPro" id="IPR034134">
    <property type="entry name" value="DAZAP1_RRM1"/>
</dbReference>
<dbReference type="InterPro" id="IPR034131">
    <property type="entry name" value="DAZAP1_RRM2"/>
</dbReference>
<dbReference type="InterPro" id="IPR012677">
    <property type="entry name" value="Nucleotide-bd_a/b_plait_sf"/>
</dbReference>
<dbReference type="InterPro" id="IPR035979">
    <property type="entry name" value="RBD_domain_sf"/>
</dbReference>
<dbReference type="InterPro" id="IPR000504">
    <property type="entry name" value="RRM_dom"/>
</dbReference>
<dbReference type="PANTHER" id="PTHR48032">
    <property type="entry name" value="RNA-BINDING PROTEIN MUSASHI HOMOLOG RBP6"/>
    <property type="match status" value="1"/>
</dbReference>
<dbReference type="PANTHER" id="PTHR48032:SF18">
    <property type="entry name" value="RRM DOMAIN-CONTAINING PROTEIN"/>
    <property type="match status" value="1"/>
</dbReference>
<dbReference type="Pfam" id="PF00076">
    <property type="entry name" value="RRM_1"/>
    <property type="match status" value="2"/>
</dbReference>
<dbReference type="SMART" id="SM00360">
    <property type="entry name" value="RRM"/>
    <property type="match status" value="2"/>
</dbReference>
<dbReference type="SUPFAM" id="SSF54928">
    <property type="entry name" value="RNA-binding domain, RBD"/>
    <property type="match status" value="2"/>
</dbReference>
<dbReference type="PROSITE" id="PS50102">
    <property type="entry name" value="RRM"/>
    <property type="match status" value="2"/>
</dbReference>
<comment type="function">
    <text evidence="3">RNA-binding protein, which is required during gametogenesis. May be involved in the actin-dependent anchoring of Vg1 mRNA in the vegetal cortex of the oocyte.</text>
</comment>
<comment type="subunit">
    <text evidence="3 4 5">Component of a mRNP complex, at least composed of DAZAP1, IGF2BP3-A, STAU and VgRBP60. Binds to the 3'-UTR of Vg1 mRNA. Interacts with profilin, a protein involved in actin assembly. Interacts with VgRBP71.</text>
</comment>
<comment type="subcellular location">
    <subcellularLocation>
        <location evidence="3">Cytoplasm</location>
    </subcellularLocation>
    <text>Concentrated in the vegetal cortex of stage III/IV oocytes.</text>
</comment>
<comment type="tissue specificity">
    <text evidence="3">Expressed in oocytes.</text>
</comment>
<comment type="developmental stage">
    <text evidence="3">Expressed gradually during oogenesis. First expressed in stage I-II oocytes at a low level. Strongly expressed during stage III-IV, and thereafter for the remainder of oogenesis.</text>
</comment>
<protein>
    <recommendedName>
        <fullName>DAZ-associated protein 1</fullName>
    </recommendedName>
    <alternativeName>
        <fullName>Deleted in azoospermia-associated protein 1</fullName>
    </alternativeName>
    <alternativeName>
        <fullName>Proline-rich Vg1 mRNA-binding protein</fullName>
    </alternativeName>
</protein>
<proteinExistence type="evidence at protein level"/>